<protein>
    <recommendedName>
        <fullName>26S proteasome regulatory subunit RPN10</fullName>
    </recommendedName>
</protein>
<organism>
    <name type="scientific">Saccharomyces cerevisiae (strain ATCC 204508 / S288c)</name>
    <name type="common">Baker's yeast</name>
    <dbReference type="NCBI Taxonomy" id="559292"/>
    <lineage>
        <taxon>Eukaryota</taxon>
        <taxon>Fungi</taxon>
        <taxon>Dikarya</taxon>
        <taxon>Ascomycota</taxon>
        <taxon>Saccharomycotina</taxon>
        <taxon>Saccharomycetes</taxon>
        <taxon>Saccharomycetales</taxon>
        <taxon>Saccharomycetaceae</taxon>
        <taxon>Saccharomyces</taxon>
    </lineage>
</organism>
<proteinExistence type="evidence at protein level"/>
<accession>P38886</accession>
<accession>D3DLE9</accession>
<name>RPN10_YEAST</name>
<comment type="function">
    <text evidence="8">Multiubiquitin binding protein.</text>
</comment>
<comment type="subunit">
    <text evidence="4 7 8">The 26S proteasome is composed of a core protease, known as the 20S proteasome, capped at one or both ends by the 19S regulatory complex (RC) (PubMed:12504901, PubMed:22927375, PubMed:8887631). The RC is composed of at least 18 different subunits in two subcomplexes, the base and the lid, which form the portions proximal and distal to the 20S proteolytic core, respectively (PubMed:22927375).</text>
</comment>
<comment type="interaction">
    <interactant intactId="EBI-15949">
        <id>P38886</id>
    </interactant>
    <interactant intactId="EBI-6174">
        <id>P48510</id>
        <label>DSK2</label>
    </interactant>
    <organismsDiffer>false</organismsDiffer>
    <experiments>5</experiments>
</comment>
<comment type="interaction">
    <interactant intactId="EBI-15949">
        <id>P38886</id>
    </interactant>
    <interactant intactId="EBI-15913">
        <id>P38764</id>
        <label>RPN1</label>
    </interactant>
    <organismsDiffer>false</organismsDiffer>
    <experiments>7</experiments>
</comment>
<comment type="interaction">
    <interactant intactId="EBI-15949">
        <id>P38886</id>
    </interactant>
    <interactant intactId="EBI-13920">
        <id>P33297</id>
        <label>RPT5</label>
    </interactant>
    <organismsDiffer>false</organismsDiffer>
    <experiments>3</experiments>
</comment>
<comment type="PTM">
    <text evidence="6">Ubiquitinated, leading to its degradation (PubMed:17190603). Ubiquitination is promoted by HUL5 (PubMed:17190603).</text>
</comment>
<comment type="disruption phenotype">
    <text evidence="8">Cells are viable.</text>
</comment>
<comment type="miscellaneous">
    <text evidence="5">Present with 17200 molecules/cell in log phase SD medium.</text>
</comment>
<comment type="similarity">
    <text evidence="10">Belongs to the proteasome subunit S5A family.</text>
</comment>
<reference key="1">
    <citation type="journal article" date="1997" name="Mol. Biol. Cell">
        <title>Yeast counterparts of subunits S5a and p58 (S3) of the human 26S proteasome are encoded by two multicopy suppressors of nin1-1.</title>
        <authorList>
            <person name="Kominami K."/>
            <person name="Okura N."/>
            <person name="Kawamura M."/>
            <person name="Demartino G.N."/>
            <person name="Slaughter C.A."/>
            <person name="Shimbara N."/>
            <person name="Chung C.H."/>
            <person name="Fujimuro M."/>
            <person name="Yokosawa H."/>
            <person name="Shimizu Y."/>
            <person name="Tanahashi N."/>
            <person name="Tanaka K."/>
            <person name="Toh-e A."/>
        </authorList>
    </citation>
    <scope>NUCLEOTIDE SEQUENCE [GENOMIC DNA]</scope>
</reference>
<reference key="2">
    <citation type="journal article" date="1994" name="Science">
        <title>Complete nucleotide sequence of Saccharomyces cerevisiae chromosome VIII.</title>
        <authorList>
            <person name="Johnston M."/>
            <person name="Andrews S."/>
            <person name="Brinkman R."/>
            <person name="Cooper J."/>
            <person name="Ding H."/>
            <person name="Dover J."/>
            <person name="Du Z."/>
            <person name="Favello A."/>
            <person name="Fulton L."/>
            <person name="Gattung S."/>
            <person name="Geisel C."/>
            <person name="Kirsten J."/>
            <person name="Kucaba T."/>
            <person name="Hillier L.W."/>
            <person name="Jier M."/>
            <person name="Johnston L."/>
            <person name="Langston Y."/>
            <person name="Latreille P."/>
            <person name="Louis E.J."/>
            <person name="Macri C."/>
            <person name="Mardis E."/>
            <person name="Menezes S."/>
            <person name="Mouser L."/>
            <person name="Nhan M."/>
            <person name="Rifkin L."/>
            <person name="Riles L."/>
            <person name="St Peter H."/>
            <person name="Trevaskis E."/>
            <person name="Vaughan K."/>
            <person name="Vignati D."/>
            <person name="Wilcox L."/>
            <person name="Wohldman P."/>
            <person name="Waterston R."/>
            <person name="Wilson R."/>
            <person name="Vaudin M."/>
        </authorList>
    </citation>
    <scope>NUCLEOTIDE SEQUENCE [LARGE SCALE GENOMIC DNA]</scope>
    <source>
        <strain>ATCC 204508 / S288c</strain>
    </source>
</reference>
<reference key="3">
    <citation type="journal article" date="2014" name="G3 (Bethesda)">
        <title>The reference genome sequence of Saccharomyces cerevisiae: Then and now.</title>
        <authorList>
            <person name="Engel S.R."/>
            <person name="Dietrich F.S."/>
            <person name="Fisk D.G."/>
            <person name="Binkley G."/>
            <person name="Balakrishnan R."/>
            <person name="Costanzo M.C."/>
            <person name="Dwight S.S."/>
            <person name="Hitz B.C."/>
            <person name="Karra K."/>
            <person name="Nash R.S."/>
            <person name="Weng S."/>
            <person name="Wong E.D."/>
            <person name="Lloyd P."/>
            <person name="Skrzypek M.S."/>
            <person name="Miyasato S.R."/>
            <person name="Simison M."/>
            <person name="Cherry J.M."/>
        </authorList>
    </citation>
    <scope>GENOME REANNOTATION</scope>
    <source>
        <strain>ATCC 204508 / S288c</strain>
    </source>
</reference>
<reference key="4">
    <citation type="journal article" date="2007" name="Genome Res.">
        <title>Approaching a complete repository of sequence-verified protein-encoding clones for Saccharomyces cerevisiae.</title>
        <authorList>
            <person name="Hu Y."/>
            <person name="Rolfs A."/>
            <person name="Bhullar B."/>
            <person name="Murthy T.V.S."/>
            <person name="Zhu C."/>
            <person name="Berger M.F."/>
            <person name="Camargo A.A."/>
            <person name="Kelley F."/>
            <person name="McCarron S."/>
            <person name="Jepson D."/>
            <person name="Richardson A."/>
            <person name="Raphael J."/>
            <person name="Moreira D."/>
            <person name="Taycher E."/>
            <person name="Zuo D."/>
            <person name="Mohr S."/>
            <person name="Kane M.F."/>
            <person name="Williamson J."/>
            <person name="Simpson A.J.G."/>
            <person name="Bulyk M.L."/>
            <person name="Harlow E."/>
            <person name="Marsischky G."/>
            <person name="Kolodner R.D."/>
            <person name="LaBaer J."/>
        </authorList>
    </citation>
    <scope>NUCLEOTIDE SEQUENCE [GENOMIC DNA]</scope>
    <source>
        <strain>ATCC 204508 / S288c</strain>
    </source>
</reference>
<reference key="5">
    <citation type="journal article" date="2003" name="Arch. Biochem. Biophys.">
        <title>N-terminal modifications of the 19S regulatory particle subunits of the yeast proteasome.</title>
        <authorList>
            <person name="Kimura Y."/>
            <person name="Saeki Y."/>
            <person name="Yokosawa H."/>
            <person name="Polevoda B."/>
            <person name="Sherman F."/>
            <person name="Hirano H."/>
        </authorList>
    </citation>
    <scope>PROTEIN SEQUENCE OF 2-8</scope>
    <scope>SUBUNIT</scope>
</reference>
<reference key="6">
    <citation type="journal article" date="1996" name="Mol. Cell. Biol.">
        <title>The multiubiquitin-chain-binding protein Mcb1 is a component of the 26S proteasome in Saccharomyces cerevisiae and plays a nonessential, substrate-specific role in protein turnover.</title>
        <authorList>
            <person name="van Nocker S."/>
            <person name="Sadis S."/>
            <person name="Rubin D.M."/>
            <person name="Glickman M."/>
            <person name="Fu H."/>
            <person name="Coux O."/>
            <person name="Wefes I."/>
            <person name="Finley D."/>
            <person name="Vierstra R.D."/>
        </authorList>
    </citation>
    <scope>FUNCTION</scope>
    <scope>SUBUNIT</scope>
    <scope>DISRUPTION PHENOTYPE</scope>
</reference>
<reference key="7">
    <citation type="journal article" date="2003" name="Nature">
        <title>Global analysis of protein expression in yeast.</title>
        <authorList>
            <person name="Ghaemmaghami S."/>
            <person name="Huh W.-K."/>
            <person name="Bower K."/>
            <person name="Howson R.W."/>
            <person name="Belle A."/>
            <person name="Dephoure N."/>
            <person name="O'Shea E.K."/>
            <person name="Weissman J.S."/>
        </authorList>
    </citation>
    <scope>LEVEL OF PROTEIN EXPRESSION [LARGE SCALE ANALYSIS]</scope>
</reference>
<reference key="8">
    <citation type="journal article" date="2006" name="Cell">
        <title>Ubiquitin chains are remodeled at the proteasome by opposing ubiquitin ligase and deubiquitinating activities.</title>
        <authorList>
            <person name="Crosas B."/>
            <person name="Hanna J."/>
            <person name="Kirkpatrick D.S."/>
            <person name="Zhang D.P."/>
            <person name="Tone Y."/>
            <person name="Hathaway N.A."/>
            <person name="Buecker C."/>
            <person name="Leggett D.S."/>
            <person name="Schmidt M."/>
            <person name="King R.W."/>
            <person name="Gygi S.P."/>
            <person name="Finley D."/>
        </authorList>
    </citation>
    <scope>UBIQUITINATION</scope>
</reference>
<reference key="9">
    <citation type="journal article" date="2012" name="Proc. Natl. Acad. Sci. U.S.A.">
        <title>N-terminal acetylome analyses and functional insights of the N-terminal acetyltransferase NatB.</title>
        <authorList>
            <person name="Van Damme P."/>
            <person name="Lasa M."/>
            <person name="Polevoda B."/>
            <person name="Gazquez C."/>
            <person name="Elosegui-Artola A."/>
            <person name="Kim D.S."/>
            <person name="De Juan-Pardo E."/>
            <person name="Demeyer K."/>
            <person name="Hole K."/>
            <person name="Larrea E."/>
            <person name="Timmerman E."/>
            <person name="Prieto J."/>
            <person name="Arnesen T."/>
            <person name="Sherman F."/>
            <person name="Gevaert K."/>
            <person name="Aldabe R."/>
        </authorList>
    </citation>
    <scope>IDENTIFICATION BY MASS SPECTROMETRY [LARGE SCALE ANALYSIS]</scope>
</reference>
<reference key="10">
    <citation type="journal article" date="2012" name="Proc. Natl. Acad. Sci. U.S.A.">
        <title>Near-atomic resolution structural model of the yeast 26S proteasome.</title>
        <authorList>
            <person name="Beck F."/>
            <person name="Unverdorben P."/>
            <person name="Bohn S."/>
            <person name="Schweitzer A."/>
            <person name="Pfeifer G."/>
            <person name="Sakata E."/>
            <person name="Nickell S."/>
            <person name="Plitzko J.M."/>
            <person name="Villa E."/>
            <person name="Baumeister W."/>
            <person name="Forster F."/>
        </authorList>
    </citation>
    <scope>STRUCTURE BY ELECTRON MICROSCOPY (7.4 ANGSTROMS) OF THE 26S PROTEASOME</scope>
</reference>
<sequence>MVLEATVLVIDNSEYSRNGDFPRTRFEAQIDSVEFIFQAKRNSNPENTVGLISGAGANPRVLSTFTAEFGKILAGLHDTQIEGKLHMATALQIAQLTLKHRQNKVQHQRIVAFVCSPISDSRDELIRLAKTLKKNNVAVDIINFGEIEQNTELLDEFIAAVNNPQEETSHLLTVTPGPRLLYENIASSPIILEEGSSGMGAFGGSGGDSDANGTFMDFGVDPSMDPELAMALRLSMEEEQQRQERLRQQQQQQDQPEQSEQPEQHQDK</sequence>
<keyword id="KW-0002">3D-structure</keyword>
<keyword id="KW-0903">Direct protein sequencing</keyword>
<keyword id="KW-0647">Proteasome</keyword>
<keyword id="KW-1185">Reference proteome</keyword>
<keyword id="KW-0832">Ubl conjugation</keyword>
<feature type="initiator methionine" description="Removed" evidence="4">
    <location>
        <position position="1"/>
    </location>
</feature>
<feature type="chain" id="PRO_0000173834" description="26S proteasome regulatory subunit RPN10">
    <location>
        <begin position="2"/>
        <end position="268"/>
    </location>
</feature>
<feature type="domain" description="VWFA" evidence="2">
    <location>
        <begin position="5"/>
        <end position="190"/>
    </location>
</feature>
<feature type="domain" description="UIM" evidence="1">
    <location>
        <begin position="223"/>
        <end position="242"/>
    </location>
</feature>
<feature type="region of interest" description="Disordered" evidence="3">
    <location>
        <begin position="226"/>
        <end position="268"/>
    </location>
</feature>
<feature type="compositionally biased region" description="Basic and acidic residues" evidence="3">
    <location>
        <begin position="235"/>
        <end position="247"/>
    </location>
</feature>
<feature type="compositionally biased region" description="Low complexity" evidence="3">
    <location>
        <begin position="248"/>
        <end position="261"/>
    </location>
</feature>
<feature type="strand" evidence="11">
    <location>
        <begin position="4"/>
        <end position="10"/>
    </location>
</feature>
<feature type="helix" evidence="11">
    <location>
        <begin position="14"/>
        <end position="16"/>
    </location>
</feature>
<feature type="strand" evidence="11">
    <location>
        <begin position="19"/>
        <end position="23"/>
    </location>
</feature>
<feature type="helix" evidence="11">
    <location>
        <begin position="25"/>
        <end position="43"/>
    </location>
</feature>
<feature type="strand" evidence="11">
    <location>
        <begin position="48"/>
        <end position="53"/>
    </location>
</feature>
<feature type="strand" evidence="11">
    <location>
        <begin position="55"/>
        <end position="58"/>
    </location>
</feature>
<feature type="strand" evidence="11">
    <location>
        <begin position="60"/>
        <end position="67"/>
    </location>
</feature>
<feature type="helix" evidence="11">
    <location>
        <begin position="69"/>
        <end position="76"/>
    </location>
</feature>
<feature type="helix" evidence="11">
    <location>
        <begin position="87"/>
        <end position="99"/>
    </location>
</feature>
<feature type="strand" evidence="11">
    <location>
        <begin position="106"/>
        <end position="114"/>
    </location>
</feature>
<feature type="helix" evidence="11">
    <location>
        <begin position="122"/>
        <end position="134"/>
    </location>
</feature>
<feature type="strand" evidence="11">
    <location>
        <begin position="137"/>
        <end position="143"/>
    </location>
</feature>
<feature type="helix" evidence="11">
    <location>
        <begin position="154"/>
        <end position="161"/>
    </location>
</feature>
<feature type="strand" evidence="11">
    <location>
        <begin position="164"/>
        <end position="166"/>
    </location>
</feature>
<feature type="strand" evidence="11">
    <location>
        <begin position="171"/>
        <end position="173"/>
    </location>
</feature>
<feature type="strand" evidence="11">
    <location>
        <begin position="176"/>
        <end position="179"/>
    </location>
</feature>
<feature type="helix" evidence="11">
    <location>
        <begin position="181"/>
        <end position="187"/>
    </location>
</feature>
<dbReference type="EMBL" id="D78022">
    <property type="protein sequence ID" value="BAA11207.1"/>
    <property type="molecule type" value="Genomic_DNA"/>
</dbReference>
<dbReference type="EMBL" id="U00030">
    <property type="protein sequence ID" value="AAB68355.1"/>
    <property type="molecule type" value="Genomic_DNA"/>
</dbReference>
<dbReference type="EMBL" id="AY558289">
    <property type="protein sequence ID" value="AAS56615.1"/>
    <property type="molecule type" value="Genomic_DNA"/>
</dbReference>
<dbReference type="EMBL" id="BK006934">
    <property type="protein sequence ID" value="DAA06893.1"/>
    <property type="molecule type" value="Genomic_DNA"/>
</dbReference>
<dbReference type="PIR" id="S46677">
    <property type="entry name" value="S46677"/>
</dbReference>
<dbReference type="RefSeq" id="NP_012070.3">
    <property type="nucleotide sequence ID" value="NM_001179331.3"/>
</dbReference>
<dbReference type="PDB" id="3JCO">
    <property type="method" value="EM"/>
    <property type="resolution" value="4.80 A"/>
    <property type="chains" value="W=1-268"/>
</dbReference>
<dbReference type="PDB" id="3JCP">
    <property type="method" value="EM"/>
    <property type="resolution" value="4.60 A"/>
    <property type="chains" value="W=1-268"/>
</dbReference>
<dbReference type="PDB" id="4CR2">
    <property type="method" value="EM"/>
    <property type="resolution" value="7.70 A"/>
    <property type="chains" value="W=1-268"/>
</dbReference>
<dbReference type="PDB" id="4CR3">
    <property type="method" value="EM"/>
    <property type="resolution" value="9.30 A"/>
    <property type="chains" value="W=1-268"/>
</dbReference>
<dbReference type="PDB" id="4CR4">
    <property type="method" value="EM"/>
    <property type="resolution" value="8.80 A"/>
    <property type="chains" value="W=1-268"/>
</dbReference>
<dbReference type="PDB" id="5A5B">
    <property type="method" value="EM"/>
    <property type="resolution" value="9.50 A"/>
    <property type="chains" value="W=1-268"/>
</dbReference>
<dbReference type="PDB" id="5LN1">
    <property type="method" value="X-ray"/>
    <property type="resolution" value="3.14 A"/>
    <property type="chains" value="A=1-191"/>
</dbReference>
<dbReference type="PDB" id="5MPB">
    <property type="method" value="EM"/>
    <property type="resolution" value="7.80 A"/>
    <property type="chains" value="W=1-268"/>
</dbReference>
<dbReference type="PDB" id="5MPC">
    <property type="method" value="EM"/>
    <property type="resolution" value="7.70 A"/>
    <property type="chains" value="W=1-268"/>
</dbReference>
<dbReference type="PDB" id="5MPD">
    <property type="method" value="EM"/>
    <property type="resolution" value="4.10 A"/>
    <property type="chains" value="W=1-268"/>
</dbReference>
<dbReference type="PDB" id="5MPE">
    <property type="method" value="EM"/>
    <property type="resolution" value="4.50 A"/>
    <property type="chains" value="W=1-268"/>
</dbReference>
<dbReference type="PDB" id="5WVI">
    <property type="method" value="EM"/>
    <property type="resolution" value="6.30 A"/>
    <property type="chains" value="W=1-268"/>
</dbReference>
<dbReference type="PDB" id="5WVK">
    <property type="method" value="EM"/>
    <property type="resolution" value="4.20 A"/>
    <property type="chains" value="W=1-268"/>
</dbReference>
<dbReference type="PDB" id="6FVT">
    <property type="method" value="EM"/>
    <property type="resolution" value="4.10 A"/>
    <property type="chains" value="W=1-197"/>
</dbReference>
<dbReference type="PDB" id="6FVU">
    <property type="method" value="EM"/>
    <property type="resolution" value="4.50 A"/>
    <property type="chains" value="W=1-197"/>
</dbReference>
<dbReference type="PDB" id="6FVV">
    <property type="method" value="EM"/>
    <property type="resolution" value="5.40 A"/>
    <property type="chains" value="W=1-197"/>
</dbReference>
<dbReference type="PDB" id="6FVW">
    <property type="method" value="EM"/>
    <property type="resolution" value="4.50 A"/>
    <property type="chains" value="W=1-197"/>
</dbReference>
<dbReference type="PDB" id="6FVX">
    <property type="method" value="EM"/>
    <property type="resolution" value="4.90 A"/>
    <property type="chains" value="W=1-197"/>
</dbReference>
<dbReference type="PDB" id="6FVY">
    <property type="method" value="EM"/>
    <property type="resolution" value="6.10 A"/>
    <property type="chains" value="W=1-197"/>
</dbReference>
<dbReference type="PDB" id="6J2C">
    <property type="method" value="EM"/>
    <property type="resolution" value="7.00 A"/>
    <property type="chains" value="W=1-268"/>
</dbReference>
<dbReference type="PDB" id="6J2N">
    <property type="method" value="EM"/>
    <property type="resolution" value="7.50 A"/>
    <property type="chains" value="W=1-268"/>
</dbReference>
<dbReference type="PDB" id="6J2Q">
    <property type="method" value="EM"/>
    <property type="resolution" value="3.80 A"/>
    <property type="chains" value="W=1-268"/>
</dbReference>
<dbReference type="PDB" id="6J2X">
    <property type="method" value="EM"/>
    <property type="resolution" value="3.80 A"/>
    <property type="chains" value="W=1-268"/>
</dbReference>
<dbReference type="PDB" id="6J30">
    <property type="method" value="EM"/>
    <property type="resolution" value="4.50 A"/>
    <property type="chains" value="W=1-268"/>
</dbReference>
<dbReference type="PDB" id="7QO3">
    <property type="method" value="EM"/>
    <property type="resolution" value="6.10 A"/>
    <property type="chains" value="W=1-268"/>
</dbReference>
<dbReference type="PDB" id="7QO5">
    <property type="method" value="EM"/>
    <property type="resolution" value="6.00 A"/>
    <property type="chains" value="W=1-268"/>
</dbReference>
<dbReference type="PDBsum" id="3JCO"/>
<dbReference type="PDBsum" id="3JCP"/>
<dbReference type="PDBsum" id="4CR2"/>
<dbReference type="PDBsum" id="4CR3"/>
<dbReference type="PDBsum" id="4CR4"/>
<dbReference type="PDBsum" id="5A5B"/>
<dbReference type="PDBsum" id="5LN1"/>
<dbReference type="PDBsum" id="5MPB"/>
<dbReference type="PDBsum" id="5MPC"/>
<dbReference type="PDBsum" id="5MPD"/>
<dbReference type="PDBsum" id="5MPE"/>
<dbReference type="PDBsum" id="5WVI"/>
<dbReference type="PDBsum" id="5WVK"/>
<dbReference type="PDBsum" id="6FVT"/>
<dbReference type="PDBsum" id="6FVU"/>
<dbReference type="PDBsum" id="6FVV"/>
<dbReference type="PDBsum" id="6FVW"/>
<dbReference type="PDBsum" id="6FVX"/>
<dbReference type="PDBsum" id="6FVY"/>
<dbReference type="PDBsum" id="6J2C"/>
<dbReference type="PDBsum" id="6J2N"/>
<dbReference type="PDBsum" id="6J2Q"/>
<dbReference type="PDBsum" id="6J2X"/>
<dbReference type="PDBsum" id="6J30"/>
<dbReference type="PDBsum" id="7QO3"/>
<dbReference type="PDBsum" id="7QO5"/>
<dbReference type="BMRB" id="P38886"/>
<dbReference type="EMDB" id="EMD-14082"/>
<dbReference type="EMDB" id="EMD-14084"/>
<dbReference type="EMDB" id="EMD-3536"/>
<dbReference type="EMDB" id="EMD-3537"/>
<dbReference type="EMDB" id="EMD-4321"/>
<dbReference type="EMDB" id="EMD-4322"/>
<dbReference type="EMDB" id="EMD-4323"/>
<dbReference type="EMDB" id="EMD-4324"/>
<dbReference type="EMDB" id="EMD-6693"/>
<dbReference type="EMDB" id="EMD-6694"/>
<dbReference type="EMDB" id="EMD-9769"/>
<dbReference type="EMDB" id="EMD-9770"/>
<dbReference type="EMDB" id="EMD-9771"/>
<dbReference type="EMDB" id="EMD-9772"/>
<dbReference type="EMDB" id="EMD-9773"/>
<dbReference type="SMR" id="P38886"/>
<dbReference type="BioGRID" id="36634">
    <property type="interactions" value="843"/>
</dbReference>
<dbReference type="ComplexPortal" id="CPX-2262">
    <property type="entry name" value="26S proteasome complex"/>
</dbReference>
<dbReference type="DIP" id="DIP-2100N"/>
<dbReference type="FunCoup" id="P38886">
    <property type="interactions" value="1210"/>
</dbReference>
<dbReference type="IntAct" id="P38886">
    <property type="interactions" value="67"/>
</dbReference>
<dbReference type="MINT" id="P38886"/>
<dbReference type="STRING" id="4932.YHR200W"/>
<dbReference type="MEROPS" id="X13.001"/>
<dbReference type="iPTMnet" id="P38886"/>
<dbReference type="PaxDb" id="4932-YHR200W"/>
<dbReference type="PeptideAtlas" id="P38886"/>
<dbReference type="EnsemblFungi" id="YHR200W_mRNA">
    <property type="protein sequence ID" value="YHR200W"/>
    <property type="gene ID" value="YHR200W"/>
</dbReference>
<dbReference type="GeneID" id="856607"/>
<dbReference type="KEGG" id="sce:YHR200W"/>
<dbReference type="AGR" id="SGD:S000001243"/>
<dbReference type="SGD" id="S000001243">
    <property type="gene designation" value="RPN10"/>
</dbReference>
<dbReference type="VEuPathDB" id="FungiDB:YHR200W"/>
<dbReference type="eggNOG" id="KOG2884">
    <property type="taxonomic scope" value="Eukaryota"/>
</dbReference>
<dbReference type="GeneTree" id="ENSGT00530000064050"/>
<dbReference type="HOGENOM" id="CLU_033293_1_0_1"/>
<dbReference type="InParanoid" id="P38886"/>
<dbReference type="OMA" id="QMSMQDQ"/>
<dbReference type="OrthoDB" id="1731724at2759"/>
<dbReference type="BioCyc" id="YEAST:G3O-31228-MONOMER"/>
<dbReference type="BioGRID-ORCS" id="856607">
    <property type="hits" value="9 hits in 10 CRISPR screens"/>
</dbReference>
<dbReference type="EvolutionaryTrace" id="P38886"/>
<dbReference type="PRO" id="PR:P38886"/>
<dbReference type="Proteomes" id="UP000002311">
    <property type="component" value="Chromosome VIII"/>
</dbReference>
<dbReference type="RNAct" id="P38886">
    <property type="molecule type" value="protein"/>
</dbReference>
<dbReference type="GO" id="GO:0005829">
    <property type="term" value="C:cytosol"/>
    <property type="evidence" value="ECO:0000318"/>
    <property type="project" value="GO_Central"/>
</dbReference>
<dbReference type="GO" id="GO:0005634">
    <property type="term" value="C:nucleus"/>
    <property type="evidence" value="ECO:0000318"/>
    <property type="project" value="GO_Central"/>
</dbReference>
<dbReference type="GO" id="GO:0000502">
    <property type="term" value="C:proteasome complex"/>
    <property type="evidence" value="ECO:0000315"/>
    <property type="project" value="SGD"/>
</dbReference>
<dbReference type="GO" id="GO:0008540">
    <property type="term" value="C:proteasome regulatory particle, base subcomplex"/>
    <property type="evidence" value="ECO:0000314"/>
    <property type="project" value="SGD"/>
</dbReference>
<dbReference type="GO" id="GO:0036435">
    <property type="term" value="F:K48-linked polyubiquitin modification-dependent protein binding"/>
    <property type="evidence" value="ECO:0000314"/>
    <property type="project" value="SGD"/>
</dbReference>
<dbReference type="GO" id="GO:0031593">
    <property type="term" value="F:polyubiquitin modification-dependent protein binding"/>
    <property type="evidence" value="ECO:0000318"/>
    <property type="project" value="GO_Central"/>
</dbReference>
<dbReference type="GO" id="GO:0043248">
    <property type="term" value="P:proteasome assembly"/>
    <property type="evidence" value="ECO:0000316"/>
    <property type="project" value="SGD"/>
</dbReference>
<dbReference type="GO" id="GO:0043161">
    <property type="term" value="P:proteasome-mediated ubiquitin-dependent protein catabolic process"/>
    <property type="evidence" value="ECO:0000314"/>
    <property type="project" value="ComplexPortal"/>
</dbReference>
<dbReference type="GO" id="GO:0006511">
    <property type="term" value="P:ubiquitin-dependent protein catabolic process"/>
    <property type="evidence" value="ECO:0000315"/>
    <property type="project" value="SGD"/>
</dbReference>
<dbReference type="CDD" id="cd01452">
    <property type="entry name" value="VWA_26S_proteasome_subunit"/>
    <property type="match status" value="1"/>
</dbReference>
<dbReference type="FunFam" id="1.10.287.3990:FF:000006">
    <property type="entry name" value="26S proteasome component"/>
    <property type="match status" value="1"/>
</dbReference>
<dbReference type="FunFam" id="3.40.50.410:FF:000005">
    <property type="entry name" value="26S proteasome non-ATPase regulatory subunit 4"/>
    <property type="match status" value="1"/>
</dbReference>
<dbReference type="Gene3D" id="1.10.287.3990">
    <property type="match status" value="1"/>
</dbReference>
<dbReference type="Gene3D" id="3.40.50.410">
    <property type="entry name" value="von Willebrand factor, type A domain"/>
    <property type="match status" value="1"/>
</dbReference>
<dbReference type="InterPro" id="IPR027040">
    <property type="entry name" value="PSMD4"/>
</dbReference>
<dbReference type="InterPro" id="IPR003903">
    <property type="entry name" value="UIM_dom"/>
</dbReference>
<dbReference type="InterPro" id="IPR002035">
    <property type="entry name" value="VWF_A"/>
</dbReference>
<dbReference type="InterPro" id="IPR036465">
    <property type="entry name" value="vWFA_dom_sf"/>
</dbReference>
<dbReference type="PANTHER" id="PTHR10223">
    <property type="entry name" value="26S PROTEASOME NON-ATPASE REGULATORY SUBUNIT 4"/>
    <property type="match status" value="1"/>
</dbReference>
<dbReference type="PANTHER" id="PTHR10223:SF0">
    <property type="entry name" value="26S PROTEASOME NON-ATPASE REGULATORY SUBUNIT 4"/>
    <property type="match status" value="1"/>
</dbReference>
<dbReference type="Pfam" id="PF13519">
    <property type="entry name" value="VWA_2"/>
    <property type="match status" value="1"/>
</dbReference>
<dbReference type="SUPFAM" id="SSF53300">
    <property type="entry name" value="vWA-like"/>
    <property type="match status" value="1"/>
</dbReference>
<dbReference type="PROSITE" id="PS50330">
    <property type="entry name" value="UIM"/>
    <property type="match status" value="1"/>
</dbReference>
<dbReference type="PROSITE" id="PS50234">
    <property type="entry name" value="VWFA"/>
    <property type="match status" value="1"/>
</dbReference>
<evidence type="ECO:0000255" key="1">
    <source>
        <dbReference type="PROSITE-ProRule" id="PRU00213"/>
    </source>
</evidence>
<evidence type="ECO:0000255" key="2">
    <source>
        <dbReference type="PROSITE-ProRule" id="PRU00219"/>
    </source>
</evidence>
<evidence type="ECO:0000256" key="3">
    <source>
        <dbReference type="SAM" id="MobiDB-lite"/>
    </source>
</evidence>
<evidence type="ECO:0000269" key="4">
    <source>
    </source>
</evidence>
<evidence type="ECO:0000269" key="5">
    <source>
    </source>
</evidence>
<evidence type="ECO:0000269" key="6">
    <source>
    </source>
</evidence>
<evidence type="ECO:0000269" key="7">
    <source>
    </source>
</evidence>
<evidence type="ECO:0000269" key="8">
    <source>
    </source>
</evidence>
<evidence type="ECO:0000303" key="9">
    <source>
    </source>
</evidence>
<evidence type="ECO:0000305" key="10"/>
<evidence type="ECO:0007829" key="11">
    <source>
        <dbReference type="PDB" id="5LN1"/>
    </source>
</evidence>
<gene>
    <name type="primary">RPN10</name>
    <name evidence="9" type="synonym">MCB1</name>
    <name type="synonym">SUN1</name>
    <name type="ordered locus">YHR200W</name>
</gene>